<evidence type="ECO:0000255" key="1">
    <source>
        <dbReference type="HAMAP-Rule" id="MF_00373"/>
    </source>
</evidence>
<evidence type="ECO:0000256" key="2">
    <source>
        <dbReference type="SAM" id="MobiDB-lite"/>
    </source>
</evidence>
<evidence type="ECO:0000305" key="3"/>
<feature type="chain" id="PRO_0000178597" description="Large ribosomal subunit protein bL28">
    <location>
        <begin position="1"/>
        <end position="78"/>
    </location>
</feature>
<feature type="region of interest" description="Disordered" evidence="2">
    <location>
        <begin position="1"/>
        <end position="22"/>
    </location>
</feature>
<keyword id="KW-1185">Reference proteome</keyword>
<keyword id="KW-0687">Ribonucleoprotein</keyword>
<keyword id="KW-0689">Ribosomal protein</keyword>
<dbReference type="EMBL" id="AL590842">
    <property type="protein sequence ID" value="CAL18740.1"/>
    <property type="molecule type" value="Genomic_DNA"/>
</dbReference>
<dbReference type="EMBL" id="AE009952">
    <property type="status" value="NOT_ANNOTATED_CDS"/>
    <property type="molecule type" value="Genomic_DNA"/>
</dbReference>
<dbReference type="EMBL" id="AE017042">
    <property type="protein sequence ID" value="AAS60332.1"/>
    <property type="molecule type" value="Genomic_DNA"/>
</dbReference>
<dbReference type="PIR" id="AC0007">
    <property type="entry name" value="AC0007"/>
</dbReference>
<dbReference type="RefSeq" id="WP_002208991.1">
    <property type="nucleotide sequence ID" value="NZ_WUCM01000015.1"/>
</dbReference>
<dbReference type="RefSeq" id="YP_002345146.1">
    <property type="nucleotide sequence ID" value="NC_003143.1"/>
</dbReference>
<dbReference type="SMR" id="Q8ZJP2"/>
<dbReference type="STRING" id="214092.YPO0050"/>
<dbReference type="PaxDb" id="214092-YPO0050"/>
<dbReference type="EnsemblBacteria" id="AAS60332">
    <property type="protein sequence ID" value="AAS60332"/>
    <property type="gene ID" value="YP_0051"/>
</dbReference>
<dbReference type="GeneID" id="96663531"/>
<dbReference type="KEGG" id="ype:YPO0050"/>
<dbReference type="KEGG" id="ypm:YP_0051"/>
<dbReference type="PATRIC" id="fig|214092.21.peg.273"/>
<dbReference type="eggNOG" id="COG0227">
    <property type="taxonomic scope" value="Bacteria"/>
</dbReference>
<dbReference type="HOGENOM" id="CLU_064548_3_1_6"/>
<dbReference type="OMA" id="LHTKRIW"/>
<dbReference type="OrthoDB" id="9805609at2"/>
<dbReference type="Proteomes" id="UP000000815">
    <property type="component" value="Chromosome"/>
</dbReference>
<dbReference type="Proteomes" id="UP000001019">
    <property type="component" value="Chromosome"/>
</dbReference>
<dbReference type="Proteomes" id="UP000002490">
    <property type="component" value="Chromosome"/>
</dbReference>
<dbReference type="GO" id="GO:0022625">
    <property type="term" value="C:cytosolic large ribosomal subunit"/>
    <property type="evidence" value="ECO:0000318"/>
    <property type="project" value="GO_Central"/>
</dbReference>
<dbReference type="GO" id="GO:0003735">
    <property type="term" value="F:structural constituent of ribosome"/>
    <property type="evidence" value="ECO:0000318"/>
    <property type="project" value="GO_Central"/>
</dbReference>
<dbReference type="GO" id="GO:0006412">
    <property type="term" value="P:translation"/>
    <property type="evidence" value="ECO:0007669"/>
    <property type="project" value="UniProtKB-UniRule"/>
</dbReference>
<dbReference type="FunFam" id="2.30.170.40:FF:000001">
    <property type="entry name" value="50S ribosomal protein L28"/>
    <property type="match status" value="1"/>
</dbReference>
<dbReference type="Gene3D" id="2.30.170.40">
    <property type="entry name" value="Ribosomal protein L28/L24"/>
    <property type="match status" value="1"/>
</dbReference>
<dbReference type="HAMAP" id="MF_00373">
    <property type="entry name" value="Ribosomal_bL28"/>
    <property type="match status" value="1"/>
</dbReference>
<dbReference type="InterPro" id="IPR050096">
    <property type="entry name" value="Bacterial_rp_bL28"/>
</dbReference>
<dbReference type="InterPro" id="IPR026569">
    <property type="entry name" value="Ribosomal_bL28"/>
</dbReference>
<dbReference type="InterPro" id="IPR034704">
    <property type="entry name" value="Ribosomal_bL28/bL31-like_sf"/>
</dbReference>
<dbReference type="InterPro" id="IPR001383">
    <property type="entry name" value="Ribosomal_bL28_bact-type"/>
</dbReference>
<dbReference type="InterPro" id="IPR037147">
    <property type="entry name" value="Ribosomal_bL28_sf"/>
</dbReference>
<dbReference type="NCBIfam" id="TIGR00009">
    <property type="entry name" value="L28"/>
    <property type="match status" value="1"/>
</dbReference>
<dbReference type="PANTHER" id="PTHR39080">
    <property type="entry name" value="50S RIBOSOMAL PROTEIN L28"/>
    <property type="match status" value="1"/>
</dbReference>
<dbReference type="PANTHER" id="PTHR39080:SF1">
    <property type="entry name" value="LARGE RIBOSOMAL SUBUNIT PROTEIN BL28A"/>
    <property type="match status" value="1"/>
</dbReference>
<dbReference type="Pfam" id="PF00830">
    <property type="entry name" value="Ribosomal_L28"/>
    <property type="match status" value="1"/>
</dbReference>
<dbReference type="SUPFAM" id="SSF143800">
    <property type="entry name" value="L28p-like"/>
    <property type="match status" value="1"/>
</dbReference>
<proteinExistence type="inferred from homology"/>
<sequence length="78" mass="9027">MSRVCQVTGKRPMSGNNRSHAMNATKRRFLPNLHSHRFWVEGEKRFVTLRVSAKGMRVIDKKGIETVLAEIRARGEKY</sequence>
<accession>Q8ZJP2</accession>
<accession>Q0WKP2</accession>
<gene>
    <name evidence="1" type="primary">rpmB</name>
    <name type="ordered locus">YPO0050</name>
    <name type="ordered locus">y0091.1</name>
    <name type="ordered locus">YP_0051</name>
</gene>
<comment type="similarity">
    <text evidence="1">Belongs to the bacterial ribosomal protein bL28 family.</text>
</comment>
<organism>
    <name type="scientific">Yersinia pestis</name>
    <dbReference type="NCBI Taxonomy" id="632"/>
    <lineage>
        <taxon>Bacteria</taxon>
        <taxon>Pseudomonadati</taxon>
        <taxon>Pseudomonadota</taxon>
        <taxon>Gammaproteobacteria</taxon>
        <taxon>Enterobacterales</taxon>
        <taxon>Yersiniaceae</taxon>
        <taxon>Yersinia</taxon>
    </lineage>
</organism>
<protein>
    <recommendedName>
        <fullName evidence="1">Large ribosomal subunit protein bL28</fullName>
    </recommendedName>
    <alternativeName>
        <fullName evidence="3">50S ribosomal protein L28</fullName>
    </alternativeName>
</protein>
<name>RL28_YERPE</name>
<reference key="1">
    <citation type="journal article" date="2001" name="Nature">
        <title>Genome sequence of Yersinia pestis, the causative agent of plague.</title>
        <authorList>
            <person name="Parkhill J."/>
            <person name="Wren B.W."/>
            <person name="Thomson N.R."/>
            <person name="Titball R.W."/>
            <person name="Holden M.T.G."/>
            <person name="Prentice M.B."/>
            <person name="Sebaihia M."/>
            <person name="James K.D."/>
            <person name="Churcher C.M."/>
            <person name="Mungall K.L."/>
            <person name="Baker S."/>
            <person name="Basham D."/>
            <person name="Bentley S.D."/>
            <person name="Brooks K."/>
            <person name="Cerdeno-Tarraga A.-M."/>
            <person name="Chillingworth T."/>
            <person name="Cronin A."/>
            <person name="Davies R.M."/>
            <person name="Davis P."/>
            <person name="Dougan G."/>
            <person name="Feltwell T."/>
            <person name="Hamlin N."/>
            <person name="Holroyd S."/>
            <person name="Jagels K."/>
            <person name="Karlyshev A.V."/>
            <person name="Leather S."/>
            <person name="Moule S."/>
            <person name="Oyston P.C.F."/>
            <person name="Quail M.A."/>
            <person name="Rutherford K.M."/>
            <person name="Simmonds M."/>
            <person name="Skelton J."/>
            <person name="Stevens K."/>
            <person name="Whitehead S."/>
            <person name="Barrell B.G."/>
        </authorList>
    </citation>
    <scope>NUCLEOTIDE SEQUENCE [LARGE SCALE GENOMIC DNA]</scope>
    <source>
        <strain>CO-92 / Biovar Orientalis</strain>
    </source>
</reference>
<reference key="2">
    <citation type="journal article" date="2002" name="J. Bacteriol.">
        <title>Genome sequence of Yersinia pestis KIM.</title>
        <authorList>
            <person name="Deng W."/>
            <person name="Burland V."/>
            <person name="Plunkett G. III"/>
            <person name="Boutin A."/>
            <person name="Mayhew G.F."/>
            <person name="Liss P."/>
            <person name="Perna N.T."/>
            <person name="Rose D.J."/>
            <person name="Mau B."/>
            <person name="Zhou S."/>
            <person name="Schwartz D.C."/>
            <person name="Fetherston J.D."/>
            <person name="Lindler L.E."/>
            <person name="Brubaker R.R."/>
            <person name="Plano G.V."/>
            <person name="Straley S.C."/>
            <person name="McDonough K.A."/>
            <person name="Nilles M.L."/>
            <person name="Matson J.S."/>
            <person name="Blattner F.R."/>
            <person name="Perry R.D."/>
        </authorList>
    </citation>
    <scope>NUCLEOTIDE SEQUENCE [LARGE SCALE GENOMIC DNA]</scope>
    <source>
        <strain>KIM10+ / Biovar Mediaevalis</strain>
    </source>
</reference>
<reference key="3">
    <citation type="journal article" date="2004" name="DNA Res.">
        <title>Complete genome sequence of Yersinia pestis strain 91001, an isolate avirulent to humans.</title>
        <authorList>
            <person name="Song Y."/>
            <person name="Tong Z."/>
            <person name="Wang J."/>
            <person name="Wang L."/>
            <person name="Guo Z."/>
            <person name="Han Y."/>
            <person name="Zhang J."/>
            <person name="Pei D."/>
            <person name="Zhou D."/>
            <person name="Qin H."/>
            <person name="Pang X."/>
            <person name="Han Y."/>
            <person name="Zhai J."/>
            <person name="Li M."/>
            <person name="Cui B."/>
            <person name="Qi Z."/>
            <person name="Jin L."/>
            <person name="Dai R."/>
            <person name="Chen F."/>
            <person name="Li S."/>
            <person name="Ye C."/>
            <person name="Du Z."/>
            <person name="Lin W."/>
            <person name="Wang J."/>
            <person name="Yu J."/>
            <person name="Yang H."/>
            <person name="Wang J."/>
            <person name="Huang P."/>
            <person name="Yang R."/>
        </authorList>
    </citation>
    <scope>NUCLEOTIDE SEQUENCE [LARGE SCALE GENOMIC DNA]</scope>
    <source>
        <strain>91001 / Biovar Mediaevalis</strain>
    </source>
</reference>